<protein>
    <recommendedName>
        <fullName evidence="1">SsrA-binding protein</fullName>
    </recommendedName>
    <alternativeName>
        <fullName evidence="1">Small protein B</fullName>
    </alternativeName>
</protein>
<keyword id="KW-0963">Cytoplasm</keyword>
<keyword id="KW-0694">RNA-binding</keyword>
<comment type="function">
    <text evidence="1">Required for rescue of stalled ribosomes mediated by trans-translation. Binds to transfer-messenger RNA (tmRNA), required for stable association of tmRNA with ribosomes. tmRNA and SmpB together mimic tRNA shape, replacing the anticodon stem-loop with SmpB. tmRNA is encoded by the ssrA gene; the 2 termini fold to resemble tRNA(Ala) and it encodes a 'tag peptide', a short internal open reading frame. During trans-translation Ala-aminoacylated tmRNA acts like a tRNA, entering the A-site of stalled ribosomes, displacing the stalled mRNA. The ribosome then switches to translate the ORF on the tmRNA; the nascent peptide is terminated with the 'tag peptide' encoded by the tmRNA and targeted for degradation. The ribosome is freed to recommence translation, which seems to be the essential function of trans-translation.</text>
</comment>
<comment type="subcellular location">
    <subcellularLocation>
        <location evidence="1">Cytoplasm</location>
    </subcellularLocation>
    <text evidence="1">The tmRNA-SmpB complex associates with stalled 70S ribosomes.</text>
</comment>
<comment type="similarity">
    <text evidence="1">Belongs to the SmpB family.</text>
</comment>
<comment type="sequence caution" evidence="2">
    <conflict type="erroneous initiation">
        <sequence resource="EMBL-CDS" id="AAA26852"/>
    </conflict>
    <text>Extended N-terminus.</text>
</comment>
<dbReference type="EMBL" id="M90060">
    <property type="protein sequence ID" value="AAA26852.1"/>
    <property type="status" value="ALT_INIT"/>
    <property type="molecule type" value="Genomic_DNA"/>
</dbReference>
<dbReference type="EMBL" id="CP003504">
    <property type="protein sequence ID" value="AFM70618.1"/>
    <property type="molecule type" value="Genomic_DNA"/>
</dbReference>
<dbReference type="PIR" id="A43259">
    <property type="entry name" value="A43259"/>
</dbReference>
<dbReference type="RefSeq" id="WP_010718601.1">
    <property type="nucleotide sequence ID" value="NZ_KB946231.1"/>
</dbReference>
<dbReference type="SMR" id="P43659"/>
<dbReference type="GeneID" id="56786970"/>
<dbReference type="KEGG" id="ehr:EHR_08465"/>
<dbReference type="eggNOG" id="COG0691">
    <property type="taxonomic scope" value="Bacteria"/>
</dbReference>
<dbReference type="HOGENOM" id="CLU_108953_0_0_9"/>
<dbReference type="OrthoDB" id="9805462at2"/>
<dbReference type="Proteomes" id="UP000002895">
    <property type="component" value="Chromosome"/>
</dbReference>
<dbReference type="GO" id="GO:0005829">
    <property type="term" value="C:cytosol"/>
    <property type="evidence" value="ECO:0007669"/>
    <property type="project" value="TreeGrafter"/>
</dbReference>
<dbReference type="GO" id="GO:0003723">
    <property type="term" value="F:RNA binding"/>
    <property type="evidence" value="ECO:0007669"/>
    <property type="project" value="UniProtKB-UniRule"/>
</dbReference>
<dbReference type="GO" id="GO:0070929">
    <property type="term" value="P:trans-translation"/>
    <property type="evidence" value="ECO:0007669"/>
    <property type="project" value="UniProtKB-UniRule"/>
</dbReference>
<dbReference type="CDD" id="cd09294">
    <property type="entry name" value="SmpB"/>
    <property type="match status" value="1"/>
</dbReference>
<dbReference type="Gene3D" id="2.40.280.10">
    <property type="match status" value="1"/>
</dbReference>
<dbReference type="HAMAP" id="MF_00023">
    <property type="entry name" value="SmpB"/>
    <property type="match status" value="1"/>
</dbReference>
<dbReference type="InterPro" id="IPR023620">
    <property type="entry name" value="SmpB"/>
</dbReference>
<dbReference type="InterPro" id="IPR000037">
    <property type="entry name" value="SsrA-bd_prot"/>
</dbReference>
<dbReference type="InterPro" id="IPR020081">
    <property type="entry name" value="SsrA-bd_prot_CS"/>
</dbReference>
<dbReference type="NCBIfam" id="NF003843">
    <property type="entry name" value="PRK05422.1"/>
    <property type="match status" value="1"/>
</dbReference>
<dbReference type="NCBIfam" id="TIGR00086">
    <property type="entry name" value="smpB"/>
    <property type="match status" value="1"/>
</dbReference>
<dbReference type="PANTHER" id="PTHR30308:SF2">
    <property type="entry name" value="SSRA-BINDING PROTEIN"/>
    <property type="match status" value="1"/>
</dbReference>
<dbReference type="PANTHER" id="PTHR30308">
    <property type="entry name" value="TMRNA-BINDING COMPONENT OF TRANS-TRANSLATION TAGGING COMPLEX"/>
    <property type="match status" value="1"/>
</dbReference>
<dbReference type="Pfam" id="PF01668">
    <property type="entry name" value="SmpB"/>
    <property type="match status" value="1"/>
</dbReference>
<dbReference type="SUPFAM" id="SSF74982">
    <property type="entry name" value="Small protein B (SmpB)"/>
    <property type="match status" value="1"/>
</dbReference>
<dbReference type="PROSITE" id="PS01317">
    <property type="entry name" value="SSRP"/>
    <property type="match status" value="1"/>
</dbReference>
<name>SSRP_ENTHA</name>
<accession>P43659</accession>
<accession>I6SDB9</accession>
<organism>
    <name type="scientific">Enterococcus hirae (strain ATCC 9790 / DSM 20160 / JCM 8729 / LMG 6399 / NBRC 3181 / NCIMB 6459 / NCDO 1258 / NCTC 12367 / WDCM 00089 / R)</name>
    <dbReference type="NCBI Taxonomy" id="768486"/>
    <lineage>
        <taxon>Bacteria</taxon>
        <taxon>Bacillati</taxon>
        <taxon>Bacillota</taxon>
        <taxon>Bacilli</taxon>
        <taxon>Lactobacillales</taxon>
        <taxon>Enterococcaceae</taxon>
        <taxon>Enterococcus</taxon>
    </lineage>
</organism>
<proteinExistence type="inferred from homology"/>
<feature type="chain" id="PRO_0000102948" description="SsrA-binding protein">
    <location>
        <begin position="1"/>
        <end position="154"/>
    </location>
</feature>
<evidence type="ECO:0000255" key="1">
    <source>
        <dbReference type="HAMAP-Rule" id="MF_00023"/>
    </source>
</evidence>
<evidence type="ECO:0000305" key="2"/>
<sequence length="154" mass="17784">MPKGDGKLIAQNKKARHDYSIIDTMEAGMVLQGTEIKSIRNSRINLKDGFVRIRNGEAFLHNVHISPYEQGNIFNHDPLRTRKLLLHKKQISRLETETKNTGVTIVPLKVYIRDGYAKVLIGLAKGKKSYDKREDLKRKDVDRQIDRTLKNFSR</sequence>
<gene>
    <name evidence="1" type="primary">smpB</name>
    <name type="ordered locus">EHR_08465</name>
</gene>
<reference key="1">
    <citation type="journal article" date="1992" name="J. Bacteriol.">
        <title>Gene structure of Enterococcus hirae (Streptococcus faecalis) F1F0-ATPase, which functions as a regulator of cytoplasmic pH.</title>
        <authorList>
            <person name="Shibata C."/>
            <person name="Ehara T."/>
            <person name="Tomura K."/>
            <person name="Igarashi K."/>
            <person name="Kobayashi H."/>
        </authorList>
    </citation>
    <scope>NUCLEOTIDE SEQUENCE [GENOMIC DNA]</scope>
    <source>
        <strain>ATCC 9790 / DSM 20160 / JCM 8729 / LMG 6399 / NBRC 3181 / NCIMB 6459 / NCDO 1258 / NCTC 12367 / WDCM 00089 / R</strain>
    </source>
</reference>
<reference key="2">
    <citation type="journal article" date="2012" name="J. Bacteriol.">
        <title>Genome sequence of Enterococcus hirae (Streptococcus faecalis) ATCC 9790, a model organism for the study of ion transport, bioenergetics, and copper homeostasis.</title>
        <authorList>
            <person name="Gaechter T."/>
            <person name="Wunderlin C."/>
            <person name="Schmidheini T."/>
            <person name="Solioz M."/>
        </authorList>
    </citation>
    <scope>NUCLEOTIDE SEQUENCE [LARGE SCALE GENOMIC DNA]</scope>
    <source>
        <strain>ATCC 9790 / DSM 20160 / JCM 8729 / LMG 6399 / NBRC 3181 / NCIMB 6459 / NCDO 1258 / NCTC 12367 / WDCM 00089 / R</strain>
    </source>
</reference>